<organism>
    <name type="scientific">Mus musculus</name>
    <name type="common">Mouse</name>
    <dbReference type="NCBI Taxonomy" id="10090"/>
    <lineage>
        <taxon>Eukaryota</taxon>
        <taxon>Metazoa</taxon>
        <taxon>Chordata</taxon>
        <taxon>Craniata</taxon>
        <taxon>Vertebrata</taxon>
        <taxon>Euteleostomi</taxon>
        <taxon>Mammalia</taxon>
        <taxon>Eutheria</taxon>
        <taxon>Euarchontoglires</taxon>
        <taxon>Glires</taxon>
        <taxon>Rodentia</taxon>
        <taxon>Myomorpha</taxon>
        <taxon>Muroidea</taxon>
        <taxon>Muridae</taxon>
        <taxon>Murinae</taxon>
        <taxon>Mus</taxon>
        <taxon>Mus</taxon>
    </lineage>
</organism>
<name>LRC52_MOUSE</name>
<evidence type="ECO:0000250" key="1"/>
<evidence type="ECO:0000255" key="2"/>
<evidence type="ECO:0000269" key="3">
    <source>
    </source>
</evidence>
<evidence type="ECO:0000269" key="4">
    <source>
    </source>
</evidence>
<dbReference type="EMBL" id="BC087947">
    <property type="protein sequence ID" value="AAH87947.1"/>
    <property type="molecule type" value="mRNA"/>
</dbReference>
<dbReference type="CCDS" id="CCDS15458.1"/>
<dbReference type="RefSeq" id="NP_001013400.1">
    <property type="nucleotide sequence ID" value="NM_001013382.3"/>
</dbReference>
<dbReference type="SMR" id="Q5M8M9"/>
<dbReference type="FunCoup" id="Q5M8M9">
    <property type="interactions" value="330"/>
</dbReference>
<dbReference type="STRING" id="10090.ENSMUSP00000047213"/>
<dbReference type="GlyCosmos" id="Q5M8M9">
    <property type="glycosylation" value="5 sites, No reported glycans"/>
</dbReference>
<dbReference type="GlyGen" id="Q5M8M9">
    <property type="glycosylation" value="5 sites"/>
</dbReference>
<dbReference type="iPTMnet" id="Q5M8M9"/>
<dbReference type="PhosphoSitePlus" id="Q5M8M9"/>
<dbReference type="PaxDb" id="10090-ENSMUSP00000047213"/>
<dbReference type="Antibodypedia" id="47069">
    <property type="antibodies" value="79 antibodies from 17 providers"/>
</dbReference>
<dbReference type="Ensembl" id="ENSMUST00000036643.6">
    <property type="protein sequence ID" value="ENSMUSP00000047213.5"/>
    <property type="gene ID" value="ENSMUSG00000040485.6"/>
</dbReference>
<dbReference type="GeneID" id="240899"/>
<dbReference type="KEGG" id="mmu:240899"/>
<dbReference type="UCSC" id="uc007dkz.1">
    <property type="organism name" value="mouse"/>
</dbReference>
<dbReference type="AGR" id="MGI:1924118"/>
<dbReference type="CTD" id="440699"/>
<dbReference type="MGI" id="MGI:1924118">
    <property type="gene designation" value="Lrrc52"/>
</dbReference>
<dbReference type="VEuPathDB" id="HostDB:ENSMUSG00000040485"/>
<dbReference type="eggNOG" id="KOG0619">
    <property type="taxonomic scope" value="Eukaryota"/>
</dbReference>
<dbReference type="GeneTree" id="ENSGT00940000156906"/>
<dbReference type="HOGENOM" id="CLU_000288_18_10_1"/>
<dbReference type="InParanoid" id="Q5M8M9"/>
<dbReference type="OMA" id="QDYIFLC"/>
<dbReference type="OrthoDB" id="4691307at2759"/>
<dbReference type="PhylomeDB" id="Q5M8M9"/>
<dbReference type="TreeFam" id="TF334689"/>
<dbReference type="BioGRID-ORCS" id="240899">
    <property type="hits" value="1 hit in 78 CRISPR screens"/>
</dbReference>
<dbReference type="PRO" id="PR:Q5M8M9"/>
<dbReference type="Proteomes" id="UP000000589">
    <property type="component" value="Chromosome 1"/>
</dbReference>
<dbReference type="RNAct" id="Q5M8M9">
    <property type="molecule type" value="protein"/>
</dbReference>
<dbReference type="Bgee" id="ENSMUSG00000040485">
    <property type="expression patterns" value="Expressed in spermatid and 24 other cell types or tissues"/>
</dbReference>
<dbReference type="GO" id="GO:0005886">
    <property type="term" value="C:plasma membrane"/>
    <property type="evidence" value="ECO:0000304"/>
    <property type="project" value="Reactome"/>
</dbReference>
<dbReference type="GO" id="GO:0008076">
    <property type="term" value="C:voltage-gated potassium channel complex"/>
    <property type="evidence" value="ECO:0007669"/>
    <property type="project" value="Ensembl"/>
</dbReference>
<dbReference type="GO" id="GO:0099104">
    <property type="term" value="F:potassium channel activator activity"/>
    <property type="evidence" value="ECO:0007669"/>
    <property type="project" value="Ensembl"/>
</dbReference>
<dbReference type="GO" id="GO:0005267">
    <property type="term" value="F:potassium channel activity"/>
    <property type="evidence" value="ECO:0000315"/>
    <property type="project" value="MGI"/>
</dbReference>
<dbReference type="GO" id="GO:0044325">
    <property type="term" value="F:transmembrane transporter binding"/>
    <property type="evidence" value="ECO:0007669"/>
    <property type="project" value="Ensembl"/>
</dbReference>
<dbReference type="GO" id="GO:0005249">
    <property type="term" value="F:voltage-gated potassium channel activity"/>
    <property type="evidence" value="ECO:0007669"/>
    <property type="project" value="Ensembl"/>
</dbReference>
<dbReference type="GO" id="GO:0051649">
    <property type="term" value="P:establishment of localization in cell"/>
    <property type="evidence" value="ECO:0000315"/>
    <property type="project" value="MGI"/>
</dbReference>
<dbReference type="GO" id="GO:0006813">
    <property type="term" value="P:potassium ion transport"/>
    <property type="evidence" value="ECO:0000315"/>
    <property type="project" value="MGI"/>
</dbReference>
<dbReference type="FunFam" id="3.80.10.10:FF:000015">
    <property type="entry name" value="Leucine rich repeat containing 38"/>
    <property type="match status" value="1"/>
</dbReference>
<dbReference type="Gene3D" id="3.80.10.10">
    <property type="entry name" value="Ribonuclease Inhibitor"/>
    <property type="match status" value="1"/>
</dbReference>
<dbReference type="InterPro" id="IPR051432">
    <property type="entry name" value="KCNMA1_auxiliary"/>
</dbReference>
<dbReference type="InterPro" id="IPR001611">
    <property type="entry name" value="Leu-rich_rpt"/>
</dbReference>
<dbReference type="InterPro" id="IPR003591">
    <property type="entry name" value="Leu-rich_rpt_typical-subtyp"/>
</dbReference>
<dbReference type="InterPro" id="IPR032675">
    <property type="entry name" value="LRR_dom_sf"/>
</dbReference>
<dbReference type="InterPro" id="IPR000372">
    <property type="entry name" value="LRRNT"/>
</dbReference>
<dbReference type="PANTHER" id="PTHR46473">
    <property type="entry name" value="GH08155P"/>
    <property type="match status" value="1"/>
</dbReference>
<dbReference type="PANTHER" id="PTHR46473:SF6">
    <property type="entry name" value="LEUCINE-RICH REPEAT-CONTAINING PROTEIN 52"/>
    <property type="match status" value="1"/>
</dbReference>
<dbReference type="Pfam" id="PF13855">
    <property type="entry name" value="LRR_8"/>
    <property type="match status" value="2"/>
</dbReference>
<dbReference type="SMART" id="SM00369">
    <property type="entry name" value="LRR_TYP"/>
    <property type="match status" value="5"/>
</dbReference>
<dbReference type="SMART" id="SM00013">
    <property type="entry name" value="LRRNT"/>
    <property type="match status" value="1"/>
</dbReference>
<dbReference type="SUPFAM" id="SSF52058">
    <property type="entry name" value="L domain-like"/>
    <property type="match status" value="1"/>
</dbReference>
<dbReference type="PROSITE" id="PS51450">
    <property type="entry name" value="LRR"/>
    <property type="match status" value="6"/>
</dbReference>
<sequence>MSLASGPSSKLLLFSLGMGLVSGSKCPNKCVCQDQEVACIDLHLTEYPADIPLNTRRLYLNNNKITSLPALQLGFLSDLVYLDCQNNRIREVMDYTFIGIFRLIYLDLSSNNLTSISPFSFSVLTNLVRLNISHNPHLLYLDKYVFANTTSLRYLDLRNTGLHIIDHNGFHHLVVLQTLYLSGNPWICNCSFLDFTIHLLVSHMDHPDAQNATCTEPAELKGWPITKVGNPLQYMCITHLDQQDYIFLLLIGFCIFAAGTVAAWLTGVCAVLYQNALRTSSGDDTEDETGSRFANQIFRSNTHLGPIRRFPELI</sequence>
<gene>
    <name type="primary">Lrrc52</name>
</gene>
<reference key="1">
    <citation type="journal article" date="2004" name="Genome Res.">
        <title>The status, quality, and expansion of the NIH full-length cDNA project: the Mammalian Gene Collection (MGC).</title>
        <authorList>
            <consortium name="The MGC Project Team"/>
        </authorList>
    </citation>
    <scope>NUCLEOTIDE SEQUENCE [LARGE SCALE MRNA]</scope>
    <source>
        <tissue>Kidney</tissue>
    </source>
</reference>
<reference key="2">
    <citation type="journal article" date="2011" name="Proc. Natl. Acad. Sci. U.S.A.">
        <title>LRRC52 (leucine-rich-repeat-containing protein 52), a testis-specific auxiliary subunit of the alkalization-activated Slo3 channel.</title>
        <authorList>
            <person name="Yang C."/>
            <person name="Zeng X.H."/>
            <person name="Zhou Y."/>
            <person name="Xia X.M."/>
            <person name="Lingle C.J."/>
        </authorList>
    </citation>
    <scope>FUNCTION</scope>
    <scope>INTERACTION WITH KCNU1</scope>
    <scope>SUBCELLULAR LOCATION</scope>
    <scope>TISSUE SPECIFICITY</scope>
    <scope>DEVELOPMENTAL STAGE</scope>
    <scope>GLYCOSYLATION</scope>
</reference>
<reference key="3">
    <citation type="journal article" date="2015" name="Proc. Natl. Acad. Sci. U.S.A.">
        <title>SLO3 auxiliary subunit LRRC52 controls gating of sperm KSPER currents and is critical for normal fertility.</title>
        <authorList>
            <person name="Zeng X.H."/>
            <person name="Yang C."/>
            <person name="Xia X.M."/>
            <person name="Liu M."/>
            <person name="Lingle C.J."/>
        </authorList>
    </citation>
    <scope>DISRUPTION PHENOTYPE</scope>
    <scope>FUNCTION</scope>
</reference>
<accession>Q5M8M9</accession>
<comment type="function">
    <text evidence="1 3 4">Auxiliary protein of the large-conductance, voltage and calcium-activated potassium channel (BK alpha). Modulates gating properties by producing a marked shift in the BK channel's voltage dependence of activation in the hyperpolarizing direction, and in the absence of calcium (By similarity). KCNU1 channel auxiliary protein. Modulates KCNU1 gating properties, shifting KCNU1 gating to more negative potentials at a given pH (PubMed:22084117, PubMed:25675513).</text>
</comment>
<comment type="subunit">
    <text evidence="1 3 4">Interacts with KCNMA1 (By similarity). Interacts with KCNU1; this interaction may be required for LRRC52 stability and changes the channel gating properties (PubMed:22084117, PubMed:25675513).</text>
</comment>
<comment type="subcellular location">
    <subcellularLocation>
        <location evidence="3">Cell membrane</location>
        <topology evidence="3">Single-pass membrane protein</topology>
    </subcellularLocation>
    <text>Expression at the cell surface may require the presence of KCNU1.</text>
</comment>
<comment type="tissue specificity">
    <text evidence="3">Testis-specific (at protein level). At the mRNA level, also detected in kidney, ventricle, spinal cord and skeletal muscle, although at lower levels compared to testis. Expression in testis at the protein level requires the presence of KCNU1.</text>
</comment>
<comment type="developmental stage">
    <text evidence="3">Very low expression levels in testis before postnatal day 25 (P25). Levels strongly increase between P25 and P30, and then remain high from P30 through P150.</text>
</comment>
<comment type="domain">
    <text evidence="1">The transmembrane domain is necessary for interaction with KCNMA1.</text>
</comment>
<comment type="PTM">
    <text evidence="3">N-glycosylated.</text>
</comment>
<comment type="disruption phenotype">
    <text evidence="4">Knockout Kcnu1 male mice exhibit severely impaired fertility. Activation of Kcnu1 currents in sperm lacking Lrrc52 requires more positive voltages and higher pH than for wild-type sperm.</text>
</comment>
<feature type="signal peptide" evidence="2">
    <location>
        <begin position="1"/>
        <end position="23"/>
    </location>
</feature>
<feature type="chain" id="PRO_0000226827" description="Leucine-rich repeat-containing protein 52">
    <location>
        <begin position="24"/>
        <end position="314"/>
    </location>
</feature>
<feature type="topological domain" description="Extracellular" evidence="2">
    <location>
        <begin position="24"/>
        <end position="244"/>
    </location>
</feature>
<feature type="transmembrane region" description="Helical" evidence="2">
    <location>
        <begin position="245"/>
        <end position="265"/>
    </location>
</feature>
<feature type="topological domain" description="Cytoplasmic" evidence="2">
    <location>
        <begin position="266"/>
        <end position="314"/>
    </location>
</feature>
<feature type="domain" description="LRRNT">
    <location>
        <begin position="24"/>
        <end position="53"/>
    </location>
</feature>
<feature type="repeat" description="LRR 1">
    <location>
        <begin position="54"/>
        <end position="73"/>
    </location>
</feature>
<feature type="repeat" description="LRR 2">
    <location>
        <begin position="78"/>
        <end position="99"/>
    </location>
</feature>
<feature type="repeat" description="LRR 3">
    <location>
        <begin position="102"/>
        <end position="123"/>
    </location>
</feature>
<feature type="repeat" description="LRR 4">
    <location>
        <begin position="126"/>
        <end position="148"/>
    </location>
</feature>
<feature type="repeat" description="LRR 5">
    <location>
        <begin position="151"/>
        <end position="172"/>
    </location>
</feature>
<feature type="domain" description="LRRCT">
    <location>
        <begin position="184"/>
        <end position="238"/>
    </location>
</feature>
<feature type="glycosylation site" description="N-linked (GlcNAc...) asparagine" evidence="2">
    <location>
        <position position="112"/>
    </location>
</feature>
<feature type="glycosylation site" description="N-linked (GlcNAc...) asparagine" evidence="2">
    <location>
        <position position="131"/>
    </location>
</feature>
<feature type="glycosylation site" description="N-linked (GlcNAc...) asparagine" evidence="2">
    <location>
        <position position="148"/>
    </location>
</feature>
<feature type="glycosylation site" description="N-linked (GlcNAc...) asparagine" evidence="2">
    <location>
        <position position="189"/>
    </location>
</feature>
<feature type="glycosylation site" description="N-linked (GlcNAc...) asparagine" evidence="2">
    <location>
        <position position="211"/>
    </location>
</feature>
<feature type="disulfide bond" evidence="2">
    <location>
        <begin position="26"/>
        <end position="32"/>
    </location>
</feature>
<feature type="disulfide bond" evidence="2">
    <location>
        <begin position="30"/>
        <end position="39"/>
    </location>
</feature>
<feature type="disulfide bond" evidence="2">
    <location>
        <begin position="188"/>
        <end position="214"/>
    </location>
</feature>
<feature type="disulfide bond" evidence="2">
    <location>
        <begin position="190"/>
        <end position="236"/>
    </location>
</feature>
<keyword id="KW-1003">Cell membrane</keyword>
<keyword id="KW-1015">Disulfide bond</keyword>
<keyword id="KW-0325">Glycoprotein</keyword>
<keyword id="KW-0407">Ion channel</keyword>
<keyword id="KW-0406">Ion transport</keyword>
<keyword id="KW-0433">Leucine-rich repeat</keyword>
<keyword id="KW-0472">Membrane</keyword>
<keyword id="KW-1185">Reference proteome</keyword>
<keyword id="KW-0677">Repeat</keyword>
<keyword id="KW-0732">Signal</keyword>
<keyword id="KW-0812">Transmembrane</keyword>
<keyword id="KW-1133">Transmembrane helix</keyword>
<keyword id="KW-0813">Transport</keyword>
<proteinExistence type="evidence at protein level"/>
<protein>
    <recommendedName>
        <fullName>Leucine-rich repeat-containing protein 52</fullName>
    </recommendedName>
    <alternativeName>
        <fullName>BK channel auxiliary gamma subunit LRRC52</fullName>
    </alternativeName>
</protein>